<feature type="signal peptide" evidence="3">
    <location>
        <begin position="1"/>
        <end position="18"/>
    </location>
</feature>
<feature type="chain" id="PRO_0000431989" description="Sphingomyelinase D" evidence="3">
    <location>
        <begin position="19"/>
        <end position="349"/>
    </location>
</feature>
<feature type="short sequence motif" description="SMD-tail" evidence="3">
    <location>
        <begin position="310"/>
        <end position="317"/>
    </location>
</feature>
<feature type="active site" evidence="2">
    <location>
        <position position="52"/>
    </location>
</feature>
<feature type="binding site" evidence="2">
    <location>
        <position position="72"/>
    </location>
    <ligand>
        <name>Mg(2+)</name>
        <dbReference type="ChEBI" id="CHEBI:18420"/>
    </ligand>
</feature>
<feature type="binding site" evidence="2">
    <location>
        <position position="74"/>
    </location>
    <ligand>
        <name>Mg(2+)</name>
        <dbReference type="ChEBI" id="CHEBI:18420"/>
    </ligand>
</feature>
<feature type="binding site" evidence="2">
    <location>
        <position position="123"/>
    </location>
    <ligand>
        <name>Mg(2+)</name>
        <dbReference type="ChEBI" id="CHEBI:18420"/>
    </ligand>
</feature>
<comment type="function">
    <text evidence="1">Catalyzes the hydrolysis of sphingomyelin. Sphingomyelinases D are produced by some spider in their venoms, but also by arthropods such as ticks, or pathogenic bacteria and fungi. They might play a role in pathogenicity through different mechanisms, such as membrane destabilization and host cell penetration, but also pulmonary inflammation and cutaneous lesions.</text>
</comment>
<comment type="catalytic activity">
    <reaction evidence="1">
        <text>a sphingomyelin + H2O = an N-acylsphing-4-enine 1-phosphate + choline + H(+)</text>
        <dbReference type="Rhea" id="RHEA:20984"/>
        <dbReference type="ChEBI" id="CHEBI:15354"/>
        <dbReference type="ChEBI" id="CHEBI:15377"/>
        <dbReference type="ChEBI" id="CHEBI:15378"/>
        <dbReference type="ChEBI" id="CHEBI:17636"/>
        <dbReference type="ChEBI" id="CHEBI:57674"/>
        <dbReference type="EC" id="3.1.4.41"/>
    </reaction>
</comment>
<comment type="cofactor">
    <cofactor evidence="2">
        <name>Mg(2+)</name>
        <dbReference type="ChEBI" id="CHEBI:18420"/>
    </cofactor>
    <text evidence="2">Binds 1 Mg(2+) ion per subunit.</text>
</comment>
<comment type="subcellular location">
    <subcellularLocation>
        <location evidence="5">Secreted</location>
    </subcellularLocation>
</comment>
<comment type="domain">
    <text evidence="4">The SMD-tail motif is highly conserved and may be responsible for structural stabilization.</text>
</comment>
<comment type="similarity">
    <text evidence="5">Belongs to the sphingomyelinase D/phospholipase D family.</text>
</comment>
<reference key="1">
    <citation type="journal article" date="2009" name="Genome Res.">
        <title>Comparative genomic analyses of the human fungal pathogens Coccidioides and their relatives.</title>
        <authorList>
            <person name="Sharpton T.J."/>
            <person name="Stajich J.E."/>
            <person name="Rounsley S.D."/>
            <person name="Gardner M.J."/>
            <person name="Wortman J.R."/>
            <person name="Jordar V.S."/>
            <person name="Maiti R."/>
            <person name="Kodira C.D."/>
            <person name="Neafsey D.E."/>
            <person name="Zeng Q."/>
            <person name="Hung C.-Y."/>
            <person name="McMahan C."/>
            <person name="Muszewska A."/>
            <person name="Grynberg M."/>
            <person name="Mandel M.A."/>
            <person name="Kellner E.M."/>
            <person name="Barker B.M."/>
            <person name="Galgiani J.N."/>
            <person name="Orbach M.J."/>
            <person name="Kirkland T.N."/>
            <person name="Cole G.T."/>
            <person name="Henn M.R."/>
            <person name="Birren B.W."/>
            <person name="Taylor J.W."/>
        </authorList>
    </citation>
    <scope>NUCLEOTIDE SEQUENCE [LARGE SCALE GENOMIC DNA]</scope>
    <source>
        <strain>UAMH 1704</strain>
    </source>
</reference>
<reference key="2">
    <citation type="journal article" date="2013" name="PLoS ONE">
        <title>Identification of new sphingomyelinases D in pathogenic fungi and other pathogenic organisms.</title>
        <authorList>
            <person name="Dias-Lopes C."/>
            <person name="Neshich I.A."/>
            <person name="Neshich G."/>
            <person name="Ortega J.M."/>
            <person name="Granier C."/>
            <person name="Chavez-Olortegui C."/>
            <person name="Molina F."/>
            <person name="Felicori L."/>
        </authorList>
    </citation>
    <scope>IDENTIFICATION</scope>
</reference>
<proteinExistence type="inferred from homology"/>
<name>SMD_UNCRE</name>
<dbReference type="EC" id="3.1.4.41" evidence="1"/>
<dbReference type="EMBL" id="CH476617">
    <property type="protein sequence ID" value="EEP79906.1"/>
    <property type="molecule type" value="Genomic_DNA"/>
</dbReference>
<dbReference type="RefSeq" id="XP_002584059.1">
    <property type="nucleotide sequence ID" value="XM_002584013.1"/>
</dbReference>
<dbReference type="GeneID" id="8442566"/>
<dbReference type="KEGG" id="ure:UREG_04748"/>
<dbReference type="VEuPathDB" id="FungiDB:UREG_04748"/>
<dbReference type="eggNOG" id="ENOG502S5U7">
    <property type="taxonomic scope" value="Eukaryota"/>
</dbReference>
<dbReference type="HOGENOM" id="CLU_059400_0_0_1"/>
<dbReference type="InParanoid" id="C4JUE5"/>
<dbReference type="OMA" id="FVWFDIK"/>
<dbReference type="OrthoDB" id="4907280at2759"/>
<dbReference type="Proteomes" id="UP000002058">
    <property type="component" value="Unassembled WGS sequence"/>
</dbReference>
<dbReference type="GO" id="GO:0005576">
    <property type="term" value="C:extracellular region"/>
    <property type="evidence" value="ECO:0007669"/>
    <property type="project" value="UniProtKB-SubCell"/>
</dbReference>
<dbReference type="GO" id="GO:0046872">
    <property type="term" value="F:metal ion binding"/>
    <property type="evidence" value="ECO:0007669"/>
    <property type="project" value="UniProtKB-KW"/>
</dbReference>
<dbReference type="GO" id="GO:0050290">
    <property type="term" value="F:sphingomyelin phosphodiesterase D activity"/>
    <property type="evidence" value="ECO:0007669"/>
    <property type="project" value="UniProtKB-EC"/>
</dbReference>
<dbReference type="GO" id="GO:0016042">
    <property type="term" value="P:lipid catabolic process"/>
    <property type="evidence" value="ECO:0007669"/>
    <property type="project" value="UniProtKB-KW"/>
</dbReference>
<dbReference type="CDD" id="cd08576">
    <property type="entry name" value="GDPD_like_SMaseD_PLD"/>
    <property type="match status" value="1"/>
</dbReference>
<dbReference type="Gene3D" id="3.20.20.190">
    <property type="entry name" value="Phosphatidylinositol (PI) phosphodiesterase"/>
    <property type="match status" value="1"/>
</dbReference>
<dbReference type="InterPro" id="IPR017946">
    <property type="entry name" value="PLC-like_Pdiesterase_TIM-brl"/>
</dbReference>
<dbReference type="SUPFAM" id="SSF51695">
    <property type="entry name" value="PLC-like phosphodiesterases"/>
    <property type="match status" value="1"/>
</dbReference>
<organism>
    <name type="scientific">Uncinocarpus reesii (strain UAMH 1704)</name>
    <dbReference type="NCBI Taxonomy" id="336963"/>
    <lineage>
        <taxon>Eukaryota</taxon>
        <taxon>Fungi</taxon>
        <taxon>Dikarya</taxon>
        <taxon>Ascomycota</taxon>
        <taxon>Pezizomycotina</taxon>
        <taxon>Eurotiomycetes</taxon>
        <taxon>Eurotiomycetidae</taxon>
        <taxon>Onygenales</taxon>
        <taxon>Onygenaceae</taxon>
        <taxon>Uncinocarpus</taxon>
    </lineage>
</organism>
<evidence type="ECO:0000250" key="1">
    <source>
        <dbReference type="UniProtKB" id="B8NQ51"/>
    </source>
</evidence>
<evidence type="ECO:0000250" key="2">
    <source>
        <dbReference type="UniProtKB" id="Q8I914"/>
    </source>
</evidence>
<evidence type="ECO:0000255" key="3"/>
<evidence type="ECO:0000303" key="4">
    <source>
    </source>
</evidence>
<evidence type="ECO:0000305" key="5"/>
<evidence type="ECO:0000312" key="6">
    <source>
        <dbReference type="EMBL" id="EEP79906.1"/>
    </source>
</evidence>
<keyword id="KW-0378">Hydrolase</keyword>
<keyword id="KW-0442">Lipid degradation</keyword>
<keyword id="KW-0443">Lipid metabolism</keyword>
<keyword id="KW-0460">Magnesium</keyword>
<keyword id="KW-0479">Metal-binding</keyword>
<keyword id="KW-1185">Reference proteome</keyword>
<keyword id="KW-0964">Secreted</keyword>
<keyword id="KW-0732">Signal</keyword>
<keyword id="KW-0843">Virulence</keyword>
<gene>
    <name evidence="6" type="ORF">UREG_04748</name>
</gene>
<protein>
    <recommendedName>
        <fullName evidence="4">Sphingomyelinase D</fullName>
        <shortName evidence="4">SMase D</shortName>
        <ecNumber evidence="1">3.1.4.41</ecNumber>
    </recommendedName>
</protein>
<accession>C4JUE5</accession>
<sequence length="349" mass="39447">MLLSSLISLALLSSQVVADPAWAPPDKGLKPEVARLLPPFLRYRRPIYAIAHRVVTVGGIKDAISHGANAFEVDMCADSIGEGWWANHDCTNGRKAGDSARKIFETFAAERKRGKTVTFVWLDFKNPDACVKNQGCSIEAIQQLCRDILEKQGIRVLYGFYKAEDSRAFKTIRNNLNDREAISLNGATTKVLKLFEGTAPKVSKHQRVMDYGDTYLDKGFGDCTEKDWYTCTELRQGADLRRKGKLGKVFAWTSTVNQGRLVDQLLGKAHVDGIIYGFKLTDYYDHADSRAAANDIISWVKRRRALYYMATNDNNPWIDIHKLFLYLLSWFSCILLLMMNEWTCPQDGA</sequence>